<protein>
    <recommendedName>
        <fullName evidence="2">Small ribosomal subunit protein uS12</fullName>
    </recommendedName>
    <alternativeName>
        <fullName evidence="4">30S ribosomal protein S12</fullName>
    </alternativeName>
</protein>
<evidence type="ECO:0000250" key="1"/>
<evidence type="ECO:0000255" key="2">
    <source>
        <dbReference type="HAMAP-Rule" id="MF_00403"/>
    </source>
</evidence>
<evidence type="ECO:0000256" key="3">
    <source>
        <dbReference type="SAM" id="MobiDB-lite"/>
    </source>
</evidence>
<evidence type="ECO:0000305" key="4"/>
<accession>Q13TG5</accession>
<reference key="1">
    <citation type="journal article" date="2006" name="Proc. Natl. Acad. Sci. U.S.A.">
        <title>Burkholderia xenovorans LB400 harbors a multi-replicon, 9.73-Mbp genome shaped for versatility.</title>
        <authorList>
            <person name="Chain P.S.G."/>
            <person name="Denef V.J."/>
            <person name="Konstantinidis K.T."/>
            <person name="Vergez L.M."/>
            <person name="Agullo L."/>
            <person name="Reyes V.L."/>
            <person name="Hauser L."/>
            <person name="Cordova M."/>
            <person name="Gomez L."/>
            <person name="Gonzalez M."/>
            <person name="Land M."/>
            <person name="Lao V."/>
            <person name="Larimer F."/>
            <person name="LiPuma J.J."/>
            <person name="Mahenthiralingam E."/>
            <person name="Malfatti S.A."/>
            <person name="Marx C.J."/>
            <person name="Parnell J.J."/>
            <person name="Ramette A."/>
            <person name="Richardson P."/>
            <person name="Seeger M."/>
            <person name="Smith D."/>
            <person name="Spilker T."/>
            <person name="Sul W.J."/>
            <person name="Tsoi T.V."/>
            <person name="Ulrich L.E."/>
            <person name="Zhulin I.B."/>
            <person name="Tiedje J.M."/>
        </authorList>
    </citation>
    <scope>NUCLEOTIDE SEQUENCE [LARGE SCALE GENOMIC DNA]</scope>
    <source>
        <strain>LB400</strain>
    </source>
</reference>
<comment type="function">
    <text evidence="2">With S4 and S5 plays an important role in translational accuracy.</text>
</comment>
<comment type="function">
    <text evidence="2">Interacts with and stabilizes bases of the 16S rRNA that are involved in tRNA selection in the A site and with the mRNA backbone. Located at the interface of the 30S and 50S subunits, it traverses the body of the 30S subunit contacting proteins on the other side and probably holding the rRNA structure together. The combined cluster of proteins S8, S12 and S17 appears to hold together the shoulder and platform of the 30S subunit.</text>
</comment>
<comment type="subunit">
    <text evidence="2">Part of the 30S ribosomal subunit. Contacts proteins S8 and S17. May interact with IF1 in the 30S initiation complex.</text>
</comment>
<comment type="similarity">
    <text evidence="2">Belongs to the universal ribosomal protein uS12 family.</text>
</comment>
<keyword id="KW-0488">Methylation</keyword>
<keyword id="KW-1185">Reference proteome</keyword>
<keyword id="KW-0687">Ribonucleoprotein</keyword>
<keyword id="KW-0689">Ribosomal protein</keyword>
<keyword id="KW-0694">RNA-binding</keyword>
<keyword id="KW-0699">rRNA-binding</keyword>
<keyword id="KW-0820">tRNA-binding</keyword>
<sequence length="126" mass="13928">MPTINQLVRKGRASETTKSKSPALQDCPQRRGVCTRVYTTTPKKPNSALRKVAKVRLTNGFEVISYIGGEGHNLQEHSVVLIRGGRVKDLPGVRYHMVRGSLDTQGVKDRKQARSKYGAKRAKAGK</sequence>
<dbReference type="EMBL" id="CP000270">
    <property type="protein sequence ID" value="ABE32624.1"/>
    <property type="molecule type" value="Genomic_DNA"/>
</dbReference>
<dbReference type="RefSeq" id="WP_006998493.1">
    <property type="nucleotide sequence ID" value="NZ_CP008760.1"/>
</dbReference>
<dbReference type="SMR" id="Q13TG5"/>
<dbReference type="STRING" id="266265.Bxe_A0309"/>
<dbReference type="GeneID" id="97055897"/>
<dbReference type="KEGG" id="bxb:DR64_2479"/>
<dbReference type="KEGG" id="bxe:Bxe_A0309"/>
<dbReference type="eggNOG" id="COG0048">
    <property type="taxonomic scope" value="Bacteria"/>
</dbReference>
<dbReference type="OrthoDB" id="9802366at2"/>
<dbReference type="Proteomes" id="UP000001817">
    <property type="component" value="Chromosome 1"/>
</dbReference>
<dbReference type="GO" id="GO:0015935">
    <property type="term" value="C:small ribosomal subunit"/>
    <property type="evidence" value="ECO:0007669"/>
    <property type="project" value="InterPro"/>
</dbReference>
<dbReference type="GO" id="GO:0019843">
    <property type="term" value="F:rRNA binding"/>
    <property type="evidence" value="ECO:0007669"/>
    <property type="project" value="UniProtKB-UniRule"/>
</dbReference>
<dbReference type="GO" id="GO:0003735">
    <property type="term" value="F:structural constituent of ribosome"/>
    <property type="evidence" value="ECO:0007669"/>
    <property type="project" value="InterPro"/>
</dbReference>
<dbReference type="GO" id="GO:0000049">
    <property type="term" value="F:tRNA binding"/>
    <property type="evidence" value="ECO:0007669"/>
    <property type="project" value="UniProtKB-UniRule"/>
</dbReference>
<dbReference type="GO" id="GO:0006412">
    <property type="term" value="P:translation"/>
    <property type="evidence" value="ECO:0007669"/>
    <property type="project" value="UniProtKB-UniRule"/>
</dbReference>
<dbReference type="CDD" id="cd03368">
    <property type="entry name" value="Ribosomal_S12"/>
    <property type="match status" value="1"/>
</dbReference>
<dbReference type="FunFam" id="2.40.50.140:FF:000001">
    <property type="entry name" value="30S ribosomal protein S12"/>
    <property type="match status" value="1"/>
</dbReference>
<dbReference type="Gene3D" id="2.40.50.140">
    <property type="entry name" value="Nucleic acid-binding proteins"/>
    <property type="match status" value="1"/>
</dbReference>
<dbReference type="HAMAP" id="MF_00403_B">
    <property type="entry name" value="Ribosomal_uS12_B"/>
    <property type="match status" value="1"/>
</dbReference>
<dbReference type="InterPro" id="IPR012340">
    <property type="entry name" value="NA-bd_OB-fold"/>
</dbReference>
<dbReference type="InterPro" id="IPR006032">
    <property type="entry name" value="Ribosomal_uS12"/>
</dbReference>
<dbReference type="InterPro" id="IPR005679">
    <property type="entry name" value="Ribosomal_uS12_bac"/>
</dbReference>
<dbReference type="NCBIfam" id="TIGR00981">
    <property type="entry name" value="rpsL_bact"/>
    <property type="match status" value="1"/>
</dbReference>
<dbReference type="PANTHER" id="PTHR11652">
    <property type="entry name" value="30S RIBOSOMAL PROTEIN S12 FAMILY MEMBER"/>
    <property type="match status" value="1"/>
</dbReference>
<dbReference type="Pfam" id="PF00164">
    <property type="entry name" value="Ribosom_S12_S23"/>
    <property type="match status" value="1"/>
</dbReference>
<dbReference type="PIRSF" id="PIRSF002133">
    <property type="entry name" value="Ribosomal_S12/S23"/>
    <property type="match status" value="1"/>
</dbReference>
<dbReference type="PRINTS" id="PR01034">
    <property type="entry name" value="RIBOSOMALS12"/>
</dbReference>
<dbReference type="SUPFAM" id="SSF50249">
    <property type="entry name" value="Nucleic acid-binding proteins"/>
    <property type="match status" value="1"/>
</dbReference>
<dbReference type="PROSITE" id="PS00055">
    <property type="entry name" value="RIBOSOMAL_S12"/>
    <property type="match status" value="1"/>
</dbReference>
<gene>
    <name evidence="2" type="primary">rpsL</name>
    <name type="ordered locus">Bxeno_A4086</name>
    <name type="ORF">Bxe_A0309</name>
</gene>
<proteinExistence type="inferred from homology"/>
<name>RS12_PARXL</name>
<feature type="chain" id="PRO_0000263546" description="Small ribosomal subunit protein uS12">
    <location>
        <begin position="1"/>
        <end position="126"/>
    </location>
</feature>
<feature type="region of interest" description="Disordered" evidence="3">
    <location>
        <begin position="1"/>
        <end position="26"/>
    </location>
</feature>
<feature type="region of interest" description="Disordered" evidence="3">
    <location>
        <begin position="103"/>
        <end position="126"/>
    </location>
</feature>
<feature type="compositionally biased region" description="Basic residues" evidence="3">
    <location>
        <begin position="113"/>
        <end position="126"/>
    </location>
</feature>
<feature type="modified residue" description="3-methylthioaspartic acid" evidence="1">
    <location>
        <position position="89"/>
    </location>
</feature>
<organism>
    <name type="scientific">Paraburkholderia xenovorans (strain LB400)</name>
    <dbReference type="NCBI Taxonomy" id="266265"/>
    <lineage>
        <taxon>Bacteria</taxon>
        <taxon>Pseudomonadati</taxon>
        <taxon>Pseudomonadota</taxon>
        <taxon>Betaproteobacteria</taxon>
        <taxon>Burkholderiales</taxon>
        <taxon>Burkholderiaceae</taxon>
        <taxon>Paraburkholderia</taxon>
    </lineage>
</organism>